<sequence length="156" mass="16995">MRSSAKQEELVKAFKALLKEEKFSSQGEIVAALQEQGFDNINQSKVSRMLTKFGAVRTRNAKMEMVYCLPAELGVPTTSSPLKNLVLDIDYNDAVVVIHTSPGAAQLIARLLDSLGKAEGILGTIAGDDTIFTTPANGFTVKDLYEAILELFDQEL</sequence>
<gene>
    <name evidence="1" type="primary">argR</name>
    <name type="ordered locus">ECUMN_3711</name>
</gene>
<evidence type="ECO:0000255" key="1">
    <source>
        <dbReference type="HAMAP-Rule" id="MF_00173"/>
    </source>
</evidence>
<organism>
    <name type="scientific">Escherichia coli O17:K52:H18 (strain UMN026 / ExPEC)</name>
    <dbReference type="NCBI Taxonomy" id="585056"/>
    <lineage>
        <taxon>Bacteria</taxon>
        <taxon>Pseudomonadati</taxon>
        <taxon>Pseudomonadota</taxon>
        <taxon>Gammaproteobacteria</taxon>
        <taxon>Enterobacterales</taxon>
        <taxon>Enterobacteriaceae</taxon>
        <taxon>Escherichia</taxon>
    </lineage>
</organism>
<accession>B7NDL5</accession>
<protein>
    <recommendedName>
        <fullName evidence="1">Arginine repressor</fullName>
    </recommendedName>
</protein>
<feature type="chain" id="PRO_1000189557" description="Arginine repressor">
    <location>
        <begin position="1"/>
        <end position="156"/>
    </location>
</feature>
<name>ARGR_ECOLU</name>
<reference key="1">
    <citation type="journal article" date="2009" name="PLoS Genet.">
        <title>Organised genome dynamics in the Escherichia coli species results in highly diverse adaptive paths.</title>
        <authorList>
            <person name="Touchon M."/>
            <person name="Hoede C."/>
            <person name="Tenaillon O."/>
            <person name="Barbe V."/>
            <person name="Baeriswyl S."/>
            <person name="Bidet P."/>
            <person name="Bingen E."/>
            <person name="Bonacorsi S."/>
            <person name="Bouchier C."/>
            <person name="Bouvet O."/>
            <person name="Calteau A."/>
            <person name="Chiapello H."/>
            <person name="Clermont O."/>
            <person name="Cruveiller S."/>
            <person name="Danchin A."/>
            <person name="Diard M."/>
            <person name="Dossat C."/>
            <person name="Karoui M.E."/>
            <person name="Frapy E."/>
            <person name="Garry L."/>
            <person name="Ghigo J.M."/>
            <person name="Gilles A.M."/>
            <person name="Johnson J."/>
            <person name="Le Bouguenec C."/>
            <person name="Lescat M."/>
            <person name="Mangenot S."/>
            <person name="Martinez-Jehanne V."/>
            <person name="Matic I."/>
            <person name="Nassif X."/>
            <person name="Oztas S."/>
            <person name="Petit M.A."/>
            <person name="Pichon C."/>
            <person name="Rouy Z."/>
            <person name="Ruf C.S."/>
            <person name="Schneider D."/>
            <person name="Tourret J."/>
            <person name="Vacherie B."/>
            <person name="Vallenet D."/>
            <person name="Medigue C."/>
            <person name="Rocha E.P.C."/>
            <person name="Denamur E."/>
        </authorList>
    </citation>
    <scope>NUCLEOTIDE SEQUENCE [LARGE SCALE GENOMIC DNA]</scope>
    <source>
        <strain>UMN026 / ExPEC</strain>
    </source>
</reference>
<dbReference type="EMBL" id="CU928163">
    <property type="protein sequence ID" value="CAR14865.1"/>
    <property type="molecule type" value="Genomic_DNA"/>
</dbReference>
<dbReference type="RefSeq" id="WP_001257846.1">
    <property type="nucleotide sequence ID" value="NC_011751.1"/>
</dbReference>
<dbReference type="RefSeq" id="YP_002414370.1">
    <property type="nucleotide sequence ID" value="NC_011751.1"/>
</dbReference>
<dbReference type="SMR" id="B7NDL5"/>
<dbReference type="STRING" id="585056.ECUMN_3711"/>
<dbReference type="GeneID" id="93778748"/>
<dbReference type="KEGG" id="eum:ECUMN_3711"/>
<dbReference type="PATRIC" id="fig|585056.7.peg.3894"/>
<dbReference type="HOGENOM" id="CLU_097103_2_0_6"/>
<dbReference type="UniPathway" id="UPA00068"/>
<dbReference type="Proteomes" id="UP000007097">
    <property type="component" value="Chromosome"/>
</dbReference>
<dbReference type="GO" id="GO:0005737">
    <property type="term" value="C:cytoplasm"/>
    <property type="evidence" value="ECO:0007669"/>
    <property type="project" value="UniProtKB-SubCell"/>
</dbReference>
<dbReference type="GO" id="GO:0034618">
    <property type="term" value="F:arginine binding"/>
    <property type="evidence" value="ECO:0007669"/>
    <property type="project" value="InterPro"/>
</dbReference>
<dbReference type="GO" id="GO:0003677">
    <property type="term" value="F:DNA binding"/>
    <property type="evidence" value="ECO:0007669"/>
    <property type="project" value="UniProtKB-KW"/>
</dbReference>
<dbReference type="GO" id="GO:0003700">
    <property type="term" value="F:DNA-binding transcription factor activity"/>
    <property type="evidence" value="ECO:0007669"/>
    <property type="project" value="UniProtKB-UniRule"/>
</dbReference>
<dbReference type="GO" id="GO:0006526">
    <property type="term" value="P:L-arginine biosynthetic process"/>
    <property type="evidence" value="ECO:0007669"/>
    <property type="project" value="UniProtKB-UniPathway"/>
</dbReference>
<dbReference type="GO" id="GO:0051259">
    <property type="term" value="P:protein complex oligomerization"/>
    <property type="evidence" value="ECO:0007669"/>
    <property type="project" value="InterPro"/>
</dbReference>
<dbReference type="GO" id="GO:1900079">
    <property type="term" value="P:regulation of arginine biosynthetic process"/>
    <property type="evidence" value="ECO:0007669"/>
    <property type="project" value="UniProtKB-UniRule"/>
</dbReference>
<dbReference type="FunFam" id="1.10.10.10:FF:000074">
    <property type="entry name" value="Arginine repressor"/>
    <property type="match status" value="1"/>
</dbReference>
<dbReference type="FunFam" id="3.30.1360.40:FF:000004">
    <property type="entry name" value="Arginine repressor"/>
    <property type="match status" value="1"/>
</dbReference>
<dbReference type="Gene3D" id="3.30.1360.40">
    <property type="match status" value="1"/>
</dbReference>
<dbReference type="Gene3D" id="1.10.10.10">
    <property type="entry name" value="Winged helix-like DNA-binding domain superfamily/Winged helix DNA-binding domain"/>
    <property type="match status" value="1"/>
</dbReference>
<dbReference type="HAMAP" id="MF_00173">
    <property type="entry name" value="Arg_repressor"/>
    <property type="match status" value="1"/>
</dbReference>
<dbReference type="InterPro" id="IPR001669">
    <property type="entry name" value="Arg_repress"/>
</dbReference>
<dbReference type="InterPro" id="IPR020899">
    <property type="entry name" value="Arg_repress_C"/>
</dbReference>
<dbReference type="InterPro" id="IPR036251">
    <property type="entry name" value="Arg_repress_C_sf"/>
</dbReference>
<dbReference type="InterPro" id="IPR020900">
    <property type="entry name" value="Arg_repress_DNA-bd"/>
</dbReference>
<dbReference type="InterPro" id="IPR036388">
    <property type="entry name" value="WH-like_DNA-bd_sf"/>
</dbReference>
<dbReference type="InterPro" id="IPR036390">
    <property type="entry name" value="WH_DNA-bd_sf"/>
</dbReference>
<dbReference type="NCBIfam" id="TIGR01529">
    <property type="entry name" value="argR_whole"/>
    <property type="match status" value="1"/>
</dbReference>
<dbReference type="NCBIfam" id="NF003457">
    <property type="entry name" value="PRK05066.1"/>
    <property type="match status" value="1"/>
</dbReference>
<dbReference type="PANTHER" id="PTHR34471">
    <property type="entry name" value="ARGININE REPRESSOR"/>
    <property type="match status" value="1"/>
</dbReference>
<dbReference type="PANTHER" id="PTHR34471:SF1">
    <property type="entry name" value="ARGININE REPRESSOR"/>
    <property type="match status" value="1"/>
</dbReference>
<dbReference type="Pfam" id="PF01316">
    <property type="entry name" value="Arg_repressor"/>
    <property type="match status" value="1"/>
</dbReference>
<dbReference type="Pfam" id="PF02863">
    <property type="entry name" value="Arg_repressor_C"/>
    <property type="match status" value="1"/>
</dbReference>
<dbReference type="PRINTS" id="PR01467">
    <property type="entry name" value="ARGREPRESSOR"/>
</dbReference>
<dbReference type="SUPFAM" id="SSF55252">
    <property type="entry name" value="C-terminal domain of arginine repressor"/>
    <property type="match status" value="1"/>
</dbReference>
<dbReference type="SUPFAM" id="SSF46785">
    <property type="entry name" value="Winged helix' DNA-binding domain"/>
    <property type="match status" value="1"/>
</dbReference>
<proteinExistence type="inferred from homology"/>
<keyword id="KW-0028">Amino-acid biosynthesis</keyword>
<keyword id="KW-0055">Arginine biosynthesis</keyword>
<keyword id="KW-0963">Cytoplasm</keyword>
<keyword id="KW-0238">DNA-binding</keyword>
<keyword id="KW-0678">Repressor</keyword>
<keyword id="KW-0804">Transcription</keyword>
<keyword id="KW-0805">Transcription regulation</keyword>
<comment type="function">
    <text evidence="1">Regulates arginine biosynthesis genes.</text>
</comment>
<comment type="pathway">
    <text>Amino-acid biosynthesis; L-arginine biosynthesis [regulation].</text>
</comment>
<comment type="subcellular location">
    <subcellularLocation>
        <location evidence="1">Cytoplasm</location>
    </subcellularLocation>
</comment>
<comment type="similarity">
    <text evidence="1">Belongs to the ArgR family.</text>
</comment>